<gene>
    <name evidence="1" type="primary">valS</name>
    <name type="ordered locus">CV_2669</name>
</gene>
<sequence>MEQLAKSYEPGDLERRWYQHWEQAGYFKPSMDTSKPSFAIQLPPPNVTGTLHMGHAFNQTIMDGLTRFYRMKGHNTLWVPGTDHAGIATQIVVERQLADQGLNRHDMGREAFTSKIWEWKEKSGGTITSQMRRVGCSVDWDREYFTMDDVRAEVVTEVFVRLYEQGLIYRGKRLSNWDAKLGTAISDLEVVSEEEDGHMWHIKYPVVGSDEFVTVATTRPETLLGDVAVAIAPDDERYLHLVGKQLELPLTGRTIPVIADSYVDKEFGTGFVKITPAHDFNDYEVGKRHGTQLINVMSLEAKILAKAQIFGFDGSAQGAIELPAAYAGLTAQEARKAMLADLQAQGLLLETKPHKLMVPRGDRTGTVIEPLLTDQWFVAMNKVAEGDATGQSIAAKAIEAVESGEVRFVPENWVNTYNQWMKNIQDWCISRQLWWGHQIPAWYDEDGNIYVGRTEAEAQAKAGGKTLRREQDVLDTWFSSALVPFSTLGWPEETPDLKAFLTSNVLVTGYEIIFFWVARMIMMTKHFTGKVPFKDVYIHGMVRDHEGKKMSKSEGNVIDPVDLIDGIALEPLVEKRTTGLRRPEKAPQIAKATEKLFPEGIPAYGTDALRFTMASYATLGRSVNFDFKRAEGYRNFCNKLWNATRFVMMNVDGKDCGQDESLPLEYSFVDQWIIGRLQQAEIDVTNALETYRFDIAAQVIYEFIWNEYCDWYVELAKVQIQGGNEAQQRATRRTLVRVLEVALRLNHPLMPFITEELWQTVAPLANAKKTESLMLAPWPVADESKISAAANARMEAFKDMVNAVRNLRGEMGIGPAVKAPLFIETADASIADFVPYLKLLARLTEGTLVAKLPEDDAPVAMSGEARLMLKVEVDKAAETARLRKEQGKVEAELAKLTAKLEKPGYVDKAPAHLVERDKAQLAELNDKLEKIRVQLVKLA</sequence>
<keyword id="KW-0030">Aminoacyl-tRNA synthetase</keyword>
<keyword id="KW-0067">ATP-binding</keyword>
<keyword id="KW-0175">Coiled coil</keyword>
<keyword id="KW-0963">Cytoplasm</keyword>
<keyword id="KW-0436">Ligase</keyword>
<keyword id="KW-0547">Nucleotide-binding</keyword>
<keyword id="KW-0648">Protein biosynthesis</keyword>
<keyword id="KW-1185">Reference proteome</keyword>
<protein>
    <recommendedName>
        <fullName evidence="1">Valine--tRNA ligase</fullName>
        <ecNumber evidence="1">6.1.1.9</ecNumber>
    </recommendedName>
    <alternativeName>
        <fullName evidence="1">Valyl-tRNA synthetase</fullName>
        <shortName evidence="1">ValRS</shortName>
    </alternativeName>
</protein>
<reference key="1">
    <citation type="journal article" date="2003" name="Proc. Natl. Acad. Sci. U.S.A.">
        <title>The complete genome sequence of Chromobacterium violaceum reveals remarkable and exploitable bacterial adaptability.</title>
        <authorList>
            <person name="Vasconcelos A.T.R."/>
            <person name="de Almeida D.F."/>
            <person name="Hungria M."/>
            <person name="Guimaraes C.T."/>
            <person name="Antonio R.V."/>
            <person name="Almeida F.C."/>
            <person name="de Almeida L.G.P."/>
            <person name="de Almeida R."/>
            <person name="Alves-Gomes J.A."/>
            <person name="Andrade E.M."/>
            <person name="Araripe J."/>
            <person name="de Araujo M.F.F."/>
            <person name="Astolfi-Filho S."/>
            <person name="Azevedo V."/>
            <person name="Baptista A.J."/>
            <person name="Bataus L.A.M."/>
            <person name="Batista J.S."/>
            <person name="Belo A."/>
            <person name="van den Berg C."/>
            <person name="Bogo M."/>
            <person name="Bonatto S."/>
            <person name="Bordignon J."/>
            <person name="Brigido M.M."/>
            <person name="Brito C.A."/>
            <person name="Brocchi M."/>
            <person name="Burity H.A."/>
            <person name="Camargo A.A."/>
            <person name="Cardoso D.D.P."/>
            <person name="Carneiro N.P."/>
            <person name="Carraro D.M."/>
            <person name="Carvalho C.M.B."/>
            <person name="Cascardo J.C.M."/>
            <person name="Cavada B.S."/>
            <person name="Chueire L.M.O."/>
            <person name="Creczynski-Pasa T.B."/>
            <person name="Cunha-Junior N.C."/>
            <person name="Fagundes N."/>
            <person name="Falcao C.L."/>
            <person name="Fantinatti F."/>
            <person name="Farias I.P."/>
            <person name="Felipe M.S.S."/>
            <person name="Ferrari L.P."/>
            <person name="Ferro J.A."/>
            <person name="Ferro M.I.T."/>
            <person name="Franco G.R."/>
            <person name="Freitas N.S.A."/>
            <person name="Furlan L.R."/>
            <person name="Gazzinelli R.T."/>
            <person name="Gomes E.A."/>
            <person name="Goncalves P.R."/>
            <person name="Grangeiro T.B."/>
            <person name="Grattapaglia D."/>
            <person name="Grisard E.C."/>
            <person name="Hanna E.S."/>
            <person name="Jardim S.N."/>
            <person name="Laurino J."/>
            <person name="Leoi L.C.T."/>
            <person name="Lima L.F.A."/>
            <person name="Loureiro M.F."/>
            <person name="Lyra M.C.C.P."/>
            <person name="Madeira H.M.F."/>
            <person name="Manfio G.P."/>
            <person name="Maranhao A.Q."/>
            <person name="Martins W.S."/>
            <person name="di Mauro S.M.Z."/>
            <person name="de Medeiros S.R.B."/>
            <person name="Meissner R.V."/>
            <person name="Moreira M.A.M."/>
            <person name="Nascimento F.F."/>
            <person name="Nicolas M.F."/>
            <person name="Oliveira J.G."/>
            <person name="Oliveira S.C."/>
            <person name="Paixao R.F.C."/>
            <person name="Parente J.A."/>
            <person name="Pedrosa F.O."/>
            <person name="Pena S.D.J."/>
            <person name="Pereira J.O."/>
            <person name="Pereira M."/>
            <person name="Pinto L.S.R.C."/>
            <person name="Pinto L.S."/>
            <person name="Porto J.I.R."/>
            <person name="Potrich D.P."/>
            <person name="Ramalho-Neto C.E."/>
            <person name="Reis A.M.M."/>
            <person name="Rigo L.U."/>
            <person name="Rondinelli E."/>
            <person name="Santos E.B.P."/>
            <person name="Santos F.R."/>
            <person name="Schneider M.P.C."/>
            <person name="Seuanez H.N."/>
            <person name="Silva A.M.R."/>
            <person name="da Silva A.L.C."/>
            <person name="Silva D.W."/>
            <person name="Silva R."/>
            <person name="Simoes I.C."/>
            <person name="Simon D."/>
            <person name="Soares C.M.A."/>
            <person name="Soares R.B.A."/>
            <person name="Souza E.M."/>
            <person name="Souza K.R.L."/>
            <person name="Souza R.C."/>
            <person name="Steffens M.B.R."/>
            <person name="Steindel M."/>
            <person name="Teixeira S.R."/>
            <person name="Urmenyi T."/>
            <person name="Vettore A."/>
            <person name="Wassem R."/>
            <person name="Zaha A."/>
            <person name="Simpson A.J.G."/>
        </authorList>
    </citation>
    <scope>NUCLEOTIDE SEQUENCE [LARGE SCALE GENOMIC DNA]</scope>
    <source>
        <strain>ATCC 12472 / DSM 30191 / JCM 1249 / CCUG 213 / NBRC 12614 / NCIMB 9131 / NCTC 9757 / MK</strain>
    </source>
</reference>
<accession>Q7NUM8</accession>
<proteinExistence type="inferred from homology"/>
<feature type="chain" id="PRO_0000224460" description="Valine--tRNA ligase">
    <location>
        <begin position="1"/>
        <end position="939"/>
    </location>
</feature>
<feature type="coiled-coil region" evidence="1">
    <location>
        <begin position="876"/>
        <end position="939"/>
    </location>
</feature>
<feature type="short sequence motif" description="'HIGH' region">
    <location>
        <begin position="45"/>
        <end position="55"/>
    </location>
</feature>
<feature type="short sequence motif" description="'KMSKS' region">
    <location>
        <begin position="549"/>
        <end position="553"/>
    </location>
</feature>
<feature type="binding site" evidence="1">
    <location>
        <position position="552"/>
    </location>
    <ligand>
        <name>ATP</name>
        <dbReference type="ChEBI" id="CHEBI:30616"/>
    </ligand>
</feature>
<dbReference type="EC" id="6.1.1.9" evidence="1"/>
<dbReference type="EMBL" id="AE016825">
    <property type="protein sequence ID" value="AAQ60339.1"/>
    <property type="molecule type" value="Genomic_DNA"/>
</dbReference>
<dbReference type="RefSeq" id="WP_011136216.1">
    <property type="nucleotide sequence ID" value="NC_005085.1"/>
</dbReference>
<dbReference type="SMR" id="Q7NUM8"/>
<dbReference type="STRING" id="243365.CV_2669"/>
<dbReference type="KEGG" id="cvi:CV_2669"/>
<dbReference type="eggNOG" id="COG0525">
    <property type="taxonomic scope" value="Bacteria"/>
</dbReference>
<dbReference type="HOGENOM" id="CLU_001493_0_2_4"/>
<dbReference type="OrthoDB" id="9810365at2"/>
<dbReference type="Proteomes" id="UP000001424">
    <property type="component" value="Chromosome"/>
</dbReference>
<dbReference type="GO" id="GO:0005829">
    <property type="term" value="C:cytosol"/>
    <property type="evidence" value="ECO:0007669"/>
    <property type="project" value="TreeGrafter"/>
</dbReference>
<dbReference type="GO" id="GO:0002161">
    <property type="term" value="F:aminoacyl-tRNA deacylase activity"/>
    <property type="evidence" value="ECO:0007669"/>
    <property type="project" value="InterPro"/>
</dbReference>
<dbReference type="GO" id="GO:0005524">
    <property type="term" value="F:ATP binding"/>
    <property type="evidence" value="ECO:0007669"/>
    <property type="project" value="UniProtKB-UniRule"/>
</dbReference>
<dbReference type="GO" id="GO:0004832">
    <property type="term" value="F:valine-tRNA ligase activity"/>
    <property type="evidence" value="ECO:0007669"/>
    <property type="project" value="UniProtKB-UniRule"/>
</dbReference>
<dbReference type="GO" id="GO:0006438">
    <property type="term" value="P:valyl-tRNA aminoacylation"/>
    <property type="evidence" value="ECO:0007669"/>
    <property type="project" value="UniProtKB-UniRule"/>
</dbReference>
<dbReference type="CDD" id="cd07962">
    <property type="entry name" value="Anticodon_Ia_Val"/>
    <property type="match status" value="1"/>
</dbReference>
<dbReference type="CDD" id="cd00817">
    <property type="entry name" value="ValRS_core"/>
    <property type="match status" value="1"/>
</dbReference>
<dbReference type="FunFam" id="1.10.730.10:FF:000009">
    <property type="entry name" value="Valine--tRNA ligase, mitochondrial"/>
    <property type="match status" value="1"/>
</dbReference>
<dbReference type="FunFam" id="3.40.50.620:FF:000020">
    <property type="entry name" value="Valine--tRNA ligase, mitochondrial"/>
    <property type="match status" value="1"/>
</dbReference>
<dbReference type="FunFam" id="3.40.50.620:FF:000078">
    <property type="entry name" value="Valine--tRNA ligase, mitochondrial"/>
    <property type="match status" value="1"/>
</dbReference>
<dbReference type="Gene3D" id="3.40.50.620">
    <property type="entry name" value="HUPs"/>
    <property type="match status" value="2"/>
</dbReference>
<dbReference type="Gene3D" id="1.10.730.10">
    <property type="entry name" value="Isoleucyl-tRNA Synthetase, Domain 1"/>
    <property type="match status" value="1"/>
</dbReference>
<dbReference type="Gene3D" id="1.10.287.380">
    <property type="entry name" value="Valyl-tRNA synthetase, C-terminal domain"/>
    <property type="match status" value="1"/>
</dbReference>
<dbReference type="HAMAP" id="MF_02004">
    <property type="entry name" value="Val_tRNA_synth_type1"/>
    <property type="match status" value="1"/>
</dbReference>
<dbReference type="InterPro" id="IPR001412">
    <property type="entry name" value="aa-tRNA-synth_I_CS"/>
</dbReference>
<dbReference type="InterPro" id="IPR002300">
    <property type="entry name" value="aa-tRNA-synth_Ia"/>
</dbReference>
<dbReference type="InterPro" id="IPR033705">
    <property type="entry name" value="Anticodon_Ia_Val"/>
</dbReference>
<dbReference type="InterPro" id="IPR013155">
    <property type="entry name" value="M/V/L/I-tRNA-synth_anticd-bd"/>
</dbReference>
<dbReference type="InterPro" id="IPR014729">
    <property type="entry name" value="Rossmann-like_a/b/a_fold"/>
</dbReference>
<dbReference type="InterPro" id="IPR010978">
    <property type="entry name" value="tRNA-bd_arm"/>
</dbReference>
<dbReference type="InterPro" id="IPR009080">
    <property type="entry name" value="tRNAsynth_Ia_anticodon-bd"/>
</dbReference>
<dbReference type="InterPro" id="IPR037118">
    <property type="entry name" value="Val-tRNA_synth_C_sf"/>
</dbReference>
<dbReference type="InterPro" id="IPR019499">
    <property type="entry name" value="Val-tRNA_synth_tRNA-bd"/>
</dbReference>
<dbReference type="InterPro" id="IPR009008">
    <property type="entry name" value="Val/Leu/Ile-tRNA-synth_edit"/>
</dbReference>
<dbReference type="InterPro" id="IPR002303">
    <property type="entry name" value="Valyl-tRNA_ligase"/>
</dbReference>
<dbReference type="NCBIfam" id="NF004349">
    <property type="entry name" value="PRK05729.1"/>
    <property type="match status" value="1"/>
</dbReference>
<dbReference type="NCBIfam" id="TIGR00422">
    <property type="entry name" value="valS"/>
    <property type="match status" value="1"/>
</dbReference>
<dbReference type="PANTHER" id="PTHR11946:SF93">
    <property type="entry name" value="VALINE--TRNA LIGASE, CHLOROPLASTIC_MITOCHONDRIAL 2"/>
    <property type="match status" value="1"/>
</dbReference>
<dbReference type="PANTHER" id="PTHR11946">
    <property type="entry name" value="VALYL-TRNA SYNTHETASES"/>
    <property type="match status" value="1"/>
</dbReference>
<dbReference type="Pfam" id="PF08264">
    <property type="entry name" value="Anticodon_1"/>
    <property type="match status" value="1"/>
</dbReference>
<dbReference type="Pfam" id="PF00133">
    <property type="entry name" value="tRNA-synt_1"/>
    <property type="match status" value="1"/>
</dbReference>
<dbReference type="Pfam" id="PF10458">
    <property type="entry name" value="Val_tRNA-synt_C"/>
    <property type="match status" value="1"/>
</dbReference>
<dbReference type="PRINTS" id="PR00986">
    <property type="entry name" value="TRNASYNTHVAL"/>
</dbReference>
<dbReference type="SUPFAM" id="SSF47323">
    <property type="entry name" value="Anticodon-binding domain of a subclass of class I aminoacyl-tRNA synthetases"/>
    <property type="match status" value="1"/>
</dbReference>
<dbReference type="SUPFAM" id="SSF52374">
    <property type="entry name" value="Nucleotidylyl transferase"/>
    <property type="match status" value="1"/>
</dbReference>
<dbReference type="SUPFAM" id="SSF46589">
    <property type="entry name" value="tRNA-binding arm"/>
    <property type="match status" value="1"/>
</dbReference>
<dbReference type="SUPFAM" id="SSF50677">
    <property type="entry name" value="ValRS/IleRS/LeuRS editing domain"/>
    <property type="match status" value="1"/>
</dbReference>
<dbReference type="PROSITE" id="PS00178">
    <property type="entry name" value="AA_TRNA_LIGASE_I"/>
    <property type="match status" value="1"/>
</dbReference>
<name>SYV_CHRVO</name>
<evidence type="ECO:0000255" key="1">
    <source>
        <dbReference type="HAMAP-Rule" id="MF_02004"/>
    </source>
</evidence>
<organism>
    <name type="scientific">Chromobacterium violaceum (strain ATCC 12472 / DSM 30191 / JCM 1249 / CCUG 213 / NBRC 12614 / NCIMB 9131 / NCTC 9757 / MK)</name>
    <dbReference type="NCBI Taxonomy" id="243365"/>
    <lineage>
        <taxon>Bacteria</taxon>
        <taxon>Pseudomonadati</taxon>
        <taxon>Pseudomonadota</taxon>
        <taxon>Betaproteobacteria</taxon>
        <taxon>Neisseriales</taxon>
        <taxon>Chromobacteriaceae</taxon>
        <taxon>Chromobacterium</taxon>
    </lineage>
</organism>
<comment type="function">
    <text evidence="1">Catalyzes the attachment of valine to tRNA(Val). As ValRS can inadvertently accommodate and process structurally similar amino acids such as threonine, to avoid such errors, it has a 'posttransfer' editing activity that hydrolyzes mischarged Thr-tRNA(Val) in a tRNA-dependent manner.</text>
</comment>
<comment type="catalytic activity">
    <reaction evidence="1">
        <text>tRNA(Val) + L-valine + ATP = L-valyl-tRNA(Val) + AMP + diphosphate</text>
        <dbReference type="Rhea" id="RHEA:10704"/>
        <dbReference type="Rhea" id="RHEA-COMP:9672"/>
        <dbReference type="Rhea" id="RHEA-COMP:9708"/>
        <dbReference type="ChEBI" id="CHEBI:30616"/>
        <dbReference type="ChEBI" id="CHEBI:33019"/>
        <dbReference type="ChEBI" id="CHEBI:57762"/>
        <dbReference type="ChEBI" id="CHEBI:78442"/>
        <dbReference type="ChEBI" id="CHEBI:78537"/>
        <dbReference type="ChEBI" id="CHEBI:456215"/>
        <dbReference type="EC" id="6.1.1.9"/>
    </reaction>
</comment>
<comment type="subunit">
    <text evidence="1">Monomer.</text>
</comment>
<comment type="subcellular location">
    <subcellularLocation>
        <location evidence="1">Cytoplasm</location>
    </subcellularLocation>
</comment>
<comment type="domain">
    <text evidence="1">ValRS has two distinct active sites: one for aminoacylation and one for editing. The misactivated threonine is translocated from the active site to the editing site.</text>
</comment>
<comment type="domain">
    <text evidence="1">The C-terminal coiled-coil domain is crucial for aminoacylation activity.</text>
</comment>
<comment type="similarity">
    <text evidence="1">Belongs to the class-I aminoacyl-tRNA synthetase family. ValS type 1 subfamily.</text>
</comment>